<name>GUAA_LIMRD</name>
<comment type="function">
    <text evidence="1">Catalyzes the synthesis of GMP from XMP.</text>
</comment>
<comment type="catalytic activity">
    <reaction evidence="1">
        <text>XMP + L-glutamine + ATP + H2O = GMP + L-glutamate + AMP + diphosphate + 2 H(+)</text>
        <dbReference type="Rhea" id="RHEA:11680"/>
        <dbReference type="ChEBI" id="CHEBI:15377"/>
        <dbReference type="ChEBI" id="CHEBI:15378"/>
        <dbReference type="ChEBI" id="CHEBI:29985"/>
        <dbReference type="ChEBI" id="CHEBI:30616"/>
        <dbReference type="ChEBI" id="CHEBI:33019"/>
        <dbReference type="ChEBI" id="CHEBI:57464"/>
        <dbReference type="ChEBI" id="CHEBI:58115"/>
        <dbReference type="ChEBI" id="CHEBI:58359"/>
        <dbReference type="ChEBI" id="CHEBI:456215"/>
        <dbReference type="EC" id="6.3.5.2"/>
    </reaction>
</comment>
<comment type="pathway">
    <text evidence="1">Purine metabolism; GMP biosynthesis; GMP from XMP (L-Gln route): step 1/1.</text>
</comment>
<comment type="subunit">
    <text evidence="1">Homodimer.</text>
</comment>
<reference key="1">
    <citation type="journal article" date="2011" name="PLoS Genet.">
        <title>The evolution of host specialization in the vertebrate gut symbiont Lactobacillus reuteri.</title>
        <authorList>
            <person name="Frese S.A."/>
            <person name="Benson A.K."/>
            <person name="Tannock G.W."/>
            <person name="Loach D.M."/>
            <person name="Kim J."/>
            <person name="Zhang M."/>
            <person name="Oh P.L."/>
            <person name="Heng N.C."/>
            <person name="Patil P.B."/>
            <person name="Juge N."/>
            <person name="Mackenzie D.A."/>
            <person name="Pearson B.M."/>
            <person name="Lapidus A."/>
            <person name="Dalin E."/>
            <person name="Tice H."/>
            <person name="Goltsman E."/>
            <person name="Land M."/>
            <person name="Hauser L."/>
            <person name="Ivanova N."/>
            <person name="Kyrpides N.C."/>
            <person name="Walter J."/>
        </authorList>
    </citation>
    <scope>NUCLEOTIDE SEQUENCE [LARGE SCALE GENOMIC DNA]</scope>
    <source>
        <strain>DSM 20016</strain>
    </source>
</reference>
<protein>
    <recommendedName>
        <fullName evidence="1">GMP synthase [glutamine-hydrolyzing]</fullName>
        <ecNumber evidence="1">6.3.5.2</ecNumber>
    </recommendedName>
    <alternativeName>
        <fullName evidence="1">GMP synthetase</fullName>
    </alternativeName>
    <alternativeName>
        <fullName evidence="1">Glutamine amidotransferase</fullName>
    </alternativeName>
</protein>
<feature type="chain" id="PRO_1000190244" description="GMP synthase [glutamine-hydrolyzing]">
    <location>
        <begin position="1"/>
        <end position="517"/>
    </location>
</feature>
<feature type="domain" description="Glutamine amidotransferase type-1" evidence="1">
    <location>
        <begin position="11"/>
        <end position="202"/>
    </location>
</feature>
<feature type="domain" description="GMPS ATP-PPase" evidence="1">
    <location>
        <begin position="203"/>
        <end position="392"/>
    </location>
</feature>
<feature type="active site" description="Nucleophile" evidence="1">
    <location>
        <position position="88"/>
    </location>
</feature>
<feature type="active site" evidence="1">
    <location>
        <position position="176"/>
    </location>
</feature>
<feature type="active site" evidence="1">
    <location>
        <position position="178"/>
    </location>
</feature>
<feature type="binding site" evidence="1">
    <location>
        <begin position="230"/>
        <end position="236"/>
    </location>
    <ligand>
        <name>ATP</name>
        <dbReference type="ChEBI" id="CHEBI:30616"/>
    </ligand>
</feature>
<evidence type="ECO:0000255" key="1">
    <source>
        <dbReference type="HAMAP-Rule" id="MF_00344"/>
    </source>
</evidence>
<proteinExistence type="inferred from homology"/>
<accession>A5VLY3</accession>
<dbReference type="EC" id="6.3.5.2" evidence="1"/>
<dbReference type="EMBL" id="CP000705">
    <property type="protein sequence ID" value="ABQ83857.1"/>
    <property type="molecule type" value="Genomic_DNA"/>
</dbReference>
<dbReference type="RefSeq" id="WP_011953557.1">
    <property type="nucleotide sequence ID" value="NC_009513.1"/>
</dbReference>
<dbReference type="SMR" id="A5VLY3"/>
<dbReference type="STRING" id="557436.Lreu_1617"/>
<dbReference type="MEROPS" id="C26.957"/>
<dbReference type="KEGG" id="lre:Lreu_1617"/>
<dbReference type="PATRIC" id="fig|557436.17.peg.886"/>
<dbReference type="eggNOG" id="COG0519">
    <property type="taxonomic scope" value="Bacteria"/>
</dbReference>
<dbReference type="HOGENOM" id="CLU_014340_0_5_9"/>
<dbReference type="OMA" id="IWQSFAV"/>
<dbReference type="UniPathway" id="UPA00189">
    <property type="reaction ID" value="UER00296"/>
</dbReference>
<dbReference type="Proteomes" id="UP000001991">
    <property type="component" value="Chromosome"/>
</dbReference>
<dbReference type="GO" id="GO:0005829">
    <property type="term" value="C:cytosol"/>
    <property type="evidence" value="ECO:0007669"/>
    <property type="project" value="TreeGrafter"/>
</dbReference>
<dbReference type="GO" id="GO:0005524">
    <property type="term" value="F:ATP binding"/>
    <property type="evidence" value="ECO:0007669"/>
    <property type="project" value="UniProtKB-UniRule"/>
</dbReference>
<dbReference type="GO" id="GO:0003921">
    <property type="term" value="F:GMP synthase activity"/>
    <property type="evidence" value="ECO:0007669"/>
    <property type="project" value="InterPro"/>
</dbReference>
<dbReference type="CDD" id="cd01742">
    <property type="entry name" value="GATase1_GMP_Synthase"/>
    <property type="match status" value="1"/>
</dbReference>
<dbReference type="CDD" id="cd01997">
    <property type="entry name" value="GMP_synthase_C"/>
    <property type="match status" value="1"/>
</dbReference>
<dbReference type="FunFam" id="3.30.300.10:FF:000002">
    <property type="entry name" value="GMP synthase [glutamine-hydrolyzing]"/>
    <property type="match status" value="1"/>
</dbReference>
<dbReference type="FunFam" id="3.40.50.620:FF:000001">
    <property type="entry name" value="GMP synthase [glutamine-hydrolyzing]"/>
    <property type="match status" value="1"/>
</dbReference>
<dbReference type="FunFam" id="3.40.50.880:FF:000001">
    <property type="entry name" value="GMP synthase [glutamine-hydrolyzing]"/>
    <property type="match status" value="1"/>
</dbReference>
<dbReference type="Gene3D" id="3.30.300.10">
    <property type="match status" value="1"/>
</dbReference>
<dbReference type="Gene3D" id="3.40.50.880">
    <property type="match status" value="1"/>
</dbReference>
<dbReference type="Gene3D" id="3.40.50.620">
    <property type="entry name" value="HUPs"/>
    <property type="match status" value="1"/>
</dbReference>
<dbReference type="HAMAP" id="MF_00344">
    <property type="entry name" value="GMP_synthase"/>
    <property type="match status" value="1"/>
</dbReference>
<dbReference type="InterPro" id="IPR029062">
    <property type="entry name" value="Class_I_gatase-like"/>
</dbReference>
<dbReference type="InterPro" id="IPR017926">
    <property type="entry name" value="GATASE"/>
</dbReference>
<dbReference type="InterPro" id="IPR001674">
    <property type="entry name" value="GMP_synth_C"/>
</dbReference>
<dbReference type="InterPro" id="IPR004739">
    <property type="entry name" value="GMP_synth_GATase"/>
</dbReference>
<dbReference type="InterPro" id="IPR022955">
    <property type="entry name" value="GMP_synthase"/>
</dbReference>
<dbReference type="InterPro" id="IPR025777">
    <property type="entry name" value="GMPS_ATP_PPase_dom"/>
</dbReference>
<dbReference type="InterPro" id="IPR022310">
    <property type="entry name" value="NAD/GMP_synthase"/>
</dbReference>
<dbReference type="InterPro" id="IPR014729">
    <property type="entry name" value="Rossmann-like_a/b/a_fold"/>
</dbReference>
<dbReference type="NCBIfam" id="TIGR00884">
    <property type="entry name" value="guaA_Cterm"/>
    <property type="match status" value="1"/>
</dbReference>
<dbReference type="NCBIfam" id="TIGR00888">
    <property type="entry name" value="guaA_Nterm"/>
    <property type="match status" value="1"/>
</dbReference>
<dbReference type="NCBIfam" id="NF000848">
    <property type="entry name" value="PRK00074.1"/>
    <property type="match status" value="1"/>
</dbReference>
<dbReference type="PANTHER" id="PTHR11922:SF2">
    <property type="entry name" value="GMP SYNTHASE [GLUTAMINE-HYDROLYZING]"/>
    <property type="match status" value="1"/>
</dbReference>
<dbReference type="PANTHER" id="PTHR11922">
    <property type="entry name" value="GMP SYNTHASE-RELATED"/>
    <property type="match status" value="1"/>
</dbReference>
<dbReference type="Pfam" id="PF00117">
    <property type="entry name" value="GATase"/>
    <property type="match status" value="1"/>
</dbReference>
<dbReference type="Pfam" id="PF00958">
    <property type="entry name" value="GMP_synt_C"/>
    <property type="match status" value="1"/>
</dbReference>
<dbReference type="Pfam" id="PF02540">
    <property type="entry name" value="NAD_synthase"/>
    <property type="match status" value="1"/>
</dbReference>
<dbReference type="PRINTS" id="PR00097">
    <property type="entry name" value="ANTSNTHASEII"/>
</dbReference>
<dbReference type="PRINTS" id="PR00099">
    <property type="entry name" value="CPSGATASE"/>
</dbReference>
<dbReference type="PRINTS" id="PR00096">
    <property type="entry name" value="GATASE"/>
</dbReference>
<dbReference type="SUPFAM" id="SSF52402">
    <property type="entry name" value="Adenine nucleotide alpha hydrolases-like"/>
    <property type="match status" value="1"/>
</dbReference>
<dbReference type="SUPFAM" id="SSF52317">
    <property type="entry name" value="Class I glutamine amidotransferase-like"/>
    <property type="match status" value="1"/>
</dbReference>
<dbReference type="SUPFAM" id="SSF54810">
    <property type="entry name" value="GMP synthetase C-terminal dimerisation domain"/>
    <property type="match status" value="1"/>
</dbReference>
<dbReference type="PROSITE" id="PS51273">
    <property type="entry name" value="GATASE_TYPE_1"/>
    <property type="match status" value="1"/>
</dbReference>
<dbReference type="PROSITE" id="PS51553">
    <property type="entry name" value="GMPS_ATP_PPASE"/>
    <property type="match status" value="1"/>
</dbReference>
<keyword id="KW-0067">ATP-binding</keyword>
<keyword id="KW-0315">Glutamine amidotransferase</keyword>
<keyword id="KW-0332">GMP biosynthesis</keyword>
<keyword id="KW-0436">Ligase</keyword>
<keyword id="KW-0547">Nucleotide-binding</keyword>
<keyword id="KW-0658">Purine biosynthesis</keyword>
<keyword id="KW-1185">Reference proteome</keyword>
<gene>
    <name evidence="1" type="primary">guaA</name>
    <name type="ordered locus">Lreu_1617</name>
</gene>
<sequence>MANINLDAFDKIIALDFGSQYNQLITRRLRDFGIYSELLSHKLTADEIKEINPKGIIFSGGPNSVYDPNAFKVDPEIFKLGIPILGICYGMQLMSYDLGGKVEKADNSEYGRADIEVLDDEAVLLKGLPKKQYVWMSHGDLVTQAPAGFEVTATSKNCPIASIADNDRKFYGVQFHPEVRNSEYGLDILRRFAFDVCGAKANWTMDDFIDMQIDEIRKEVGDKKVILGLSGGVDSSVTAVLIHKAIGDQLTCIFVDHGLLRKNEADQVMDALSRDLGVNIIKVDAADRFLGKLEGVTDPEQKRKIIGKEFIEVFNEEAKKIKDADFLAQGTLYTDVIESGTDTAQTIKSHHNVGGLPKKLGFKLIEPLRKLFKDETRELGEKLGIPHELVWRQPFPGPGLGIRVIGEITPEKLEIVRESDAILREEIKKAGLDEEIWQYFTVLPGIRSVGVMGDGRTYDYAVAIRAVTSIDGMTADFAKIPWDILQKISVRIVNEVDHVNRILYDVTSKPPSTIEYE</sequence>
<organism>
    <name type="scientific">Limosilactobacillus reuteri (strain DSM 20016)</name>
    <name type="common">Lactobacillus reuteri</name>
    <dbReference type="NCBI Taxonomy" id="557436"/>
    <lineage>
        <taxon>Bacteria</taxon>
        <taxon>Bacillati</taxon>
        <taxon>Bacillota</taxon>
        <taxon>Bacilli</taxon>
        <taxon>Lactobacillales</taxon>
        <taxon>Lactobacillaceae</taxon>
        <taxon>Limosilactobacillus</taxon>
    </lineage>
</organism>